<comment type="function">
    <text evidence="1">Transfers and isomerizes the ribose moiety from AdoMet to the 7-aminomethyl group of 7-deazaguanine (preQ1-tRNA) to give epoxyqueuosine (oQ-tRNA).</text>
</comment>
<comment type="catalytic activity">
    <reaction evidence="1">
        <text>7-aminomethyl-7-carbaguanosine(34) in tRNA + S-adenosyl-L-methionine = epoxyqueuosine(34) in tRNA + adenine + L-methionine + 2 H(+)</text>
        <dbReference type="Rhea" id="RHEA:32155"/>
        <dbReference type="Rhea" id="RHEA-COMP:10342"/>
        <dbReference type="Rhea" id="RHEA-COMP:18582"/>
        <dbReference type="ChEBI" id="CHEBI:15378"/>
        <dbReference type="ChEBI" id="CHEBI:16708"/>
        <dbReference type="ChEBI" id="CHEBI:57844"/>
        <dbReference type="ChEBI" id="CHEBI:59789"/>
        <dbReference type="ChEBI" id="CHEBI:82833"/>
        <dbReference type="ChEBI" id="CHEBI:194443"/>
        <dbReference type="EC" id="2.4.99.17"/>
    </reaction>
</comment>
<comment type="pathway">
    <text evidence="1">tRNA modification; tRNA-queuosine biosynthesis.</text>
</comment>
<comment type="subunit">
    <text evidence="1">Monomer.</text>
</comment>
<comment type="subcellular location">
    <subcellularLocation>
        <location evidence="1">Cytoplasm</location>
    </subcellularLocation>
</comment>
<comment type="similarity">
    <text evidence="1">Belongs to the QueA family.</text>
</comment>
<organism>
    <name type="scientific">Escherichia coli O8 (strain IAI1)</name>
    <dbReference type="NCBI Taxonomy" id="585034"/>
    <lineage>
        <taxon>Bacteria</taxon>
        <taxon>Pseudomonadati</taxon>
        <taxon>Pseudomonadota</taxon>
        <taxon>Gammaproteobacteria</taxon>
        <taxon>Enterobacterales</taxon>
        <taxon>Enterobacteriaceae</taxon>
        <taxon>Escherichia</taxon>
    </lineage>
</organism>
<proteinExistence type="inferred from homology"/>
<gene>
    <name evidence="1" type="primary">queA</name>
    <name type="ordered locus">ECIAI1_0405</name>
</gene>
<keyword id="KW-0963">Cytoplasm</keyword>
<keyword id="KW-0671">Queuosine biosynthesis</keyword>
<keyword id="KW-0949">S-adenosyl-L-methionine</keyword>
<keyword id="KW-0808">Transferase</keyword>
<feature type="chain" id="PRO_1000117531" description="S-adenosylmethionine:tRNA ribosyltransferase-isomerase">
    <location>
        <begin position="1"/>
        <end position="356"/>
    </location>
</feature>
<reference key="1">
    <citation type="journal article" date="2009" name="PLoS Genet.">
        <title>Organised genome dynamics in the Escherichia coli species results in highly diverse adaptive paths.</title>
        <authorList>
            <person name="Touchon M."/>
            <person name="Hoede C."/>
            <person name="Tenaillon O."/>
            <person name="Barbe V."/>
            <person name="Baeriswyl S."/>
            <person name="Bidet P."/>
            <person name="Bingen E."/>
            <person name="Bonacorsi S."/>
            <person name="Bouchier C."/>
            <person name="Bouvet O."/>
            <person name="Calteau A."/>
            <person name="Chiapello H."/>
            <person name="Clermont O."/>
            <person name="Cruveiller S."/>
            <person name="Danchin A."/>
            <person name="Diard M."/>
            <person name="Dossat C."/>
            <person name="Karoui M.E."/>
            <person name="Frapy E."/>
            <person name="Garry L."/>
            <person name="Ghigo J.M."/>
            <person name="Gilles A.M."/>
            <person name="Johnson J."/>
            <person name="Le Bouguenec C."/>
            <person name="Lescat M."/>
            <person name="Mangenot S."/>
            <person name="Martinez-Jehanne V."/>
            <person name="Matic I."/>
            <person name="Nassif X."/>
            <person name="Oztas S."/>
            <person name="Petit M.A."/>
            <person name="Pichon C."/>
            <person name="Rouy Z."/>
            <person name="Ruf C.S."/>
            <person name="Schneider D."/>
            <person name="Tourret J."/>
            <person name="Vacherie B."/>
            <person name="Vallenet D."/>
            <person name="Medigue C."/>
            <person name="Rocha E.P.C."/>
            <person name="Denamur E."/>
        </authorList>
    </citation>
    <scope>NUCLEOTIDE SEQUENCE [LARGE SCALE GENOMIC DNA]</scope>
    <source>
        <strain>IAI1</strain>
    </source>
</reference>
<accession>B7M3P4</accession>
<dbReference type="EC" id="2.4.99.17" evidence="1"/>
<dbReference type="EMBL" id="CU928160">
    <property type="protein sequence ID" value="CAQ97277.1"/>
    <property type="molecule type" value="Genomic_DNA"/>
</dbReference>
<dbReference type="RefSeq" id="WP_001266508.1">
    <property type="nucleotide sequence ID" value="NC_011741.1"/>
</dbReference>
<dbReference type="SMR" id="B7M3P4"/>
<dbReference type="KEGG" id="ecr:ECIAI1_0405"/>
<dbReference type="HOGENOM" id="CLU_039110_1_0_6"/>
<dbReference type="UniPathway" id="UPA00392"/>
<dbReference type="GO" id="GO:0005737">
    <property type="term" value="C:cytoplasm"/>
    <property type="evidence" value="ECO:0007669"/>
    <property type="project" value="UniProtKB-SubCell"/>
</dbReference>
<dbReference type="GO" id="GO:0051075">
    <property type="term" value="F:S-adenosylmethionine:tRNA ribosyltransferase-isomerase activity"/>
    <property type="evidence" value="ECO:0007669"/>
    <property type="project" value="UniProtKB-EC"/>
</dbReference>
<dbReference type="GO" id="GO:0008616">
    <property type="term" value="P:queuosine biosynthetic process"/>
    <property type="evidence" value="ECO:0007669"/>
    <property type="project" value="UniProtKB-UniRule"/>
</dbReference>
<dbReference type="GO" id="GO:0002099">
    <property type="term" value="P:tRNA wobble guanine modification"/>
    <property type="evidence" value="ECO:0007669"/>
    <property type="project" value="TreeGrafter"/>
</dbReference>
<dbReference type="FunFam" id="2.40.10.240:FF:000001">
    <property type="entry name" value="S-adenosylmethionine:tRNA ribosyltransferase-isomerase"/>
    <property type="match status" value="1"/>
</dbReference>
<dbReference type="FunFam" id="3.40.1780.10:FF:000001">
    <property type="entry name" value="S-adenosylmethionine:tRNA ribosyltransferase-isomerase"/>
    <property type="match status" value="1"/>
</dbReference>
<dbReference type="Gene3D" id="2.40.10.240">
    <property type="entry name" value="QueA-like"/>
    <property type="match status" value="1"/>
</dbReference>
<dbReference type="Gene3D" id="3.40.1780.10">
    <property type="entry name" value="QueA-like"/>
    <property type="match status" value="1"/>
</dbReference>
<dbReference type="HAMAP" id="MF_00113">
    <property type="entry name" value="QueA"/>
    <property type="match status" value="1"/>
</dbReference>
<dbReference type="InterPro" id="IPR003699">
    <property type="entry name" value="QueA"/>
</dbReference>
<dbReference type="InterPro" id="IPR042118">
    <property type="entry name" value="QueA_dom1"/>
</dbReference>
<dbReference type="InterPro" id="IPR042119">
    <property type="entry name" value="QueA_dom2"/>
</dbReference>
<dbReference type="InterPro" id="IPR036100">
    <property type="entry name" value="QueA_sf"/>
</dbReference>
<dbReference type="NCBIfam" id="NF001140">
    <property type="entry name" value="PRK00147.1"/>
    <property type="match status" value="1"/>
</dbReference>
<dbReference type="NCBIfam" id="TIGR00113">
    <property type="entry name" value="queA"/>
    <property type="match status" value="1"/>
</dbReference>
<dbReference type="PANTHER" id="PTHR30307">
    <property type="entry name" value="S-ADENOSYLMETHIONINE:TRNA RIBOSYLTRANSFERASE-ISOMERASE"/>
    <property type="match status" value="1"/>
</dbReference>
<dbReference type="PANTHER" id="PTHR30307:SF0">
    <property type="entry name" value="S-ADENOSYLMETHIONINE:TRNA RIBOSYLTRANSFERASE-ISOMERASE"/>
    <property type="match status" value="1"/>
</dbReference>
<dbReference type="Pfam" id="PF02547">
    <property type="entry name" value="Queuosine_synth"/>
    <property type="match status" value="1"/>
</dbReference>
<dbReference type="SUPFAM" id="SSF111337">
    <property type="entry name" value="QueA-like"/>
    <property type="match status" value="1"/>
</dbReference>
<name>QUEA_ECO8A</name>
<sequence>MRVTDFSFELPESLIAHYPMPERSSCRLLSLDGPTGALTHGTFTDLLDKLNPGDLLVFNNTRVIPARLFGRKASGGKIEVLVERMLDDKRILAHIRASKAPKPGAELLLGDDESINATMTARHGALFEVGFNDERSVLDILNSIGHMPLPPYIDRPDEDADRELYQTVYSEKPGAVAAPTAGLHFDEPLLEKLRAKGVEMAFVTLHVGAGTFQPVRVDTIEDHIMHSEYAEVPQDVVDAVLAAKARGNRVIAVGTTSVRSLESAAQAAKNDLIEPFFDDTQIFIYPGFQYKVVDALVTNFHLPESTLIMLVSAFAGYQHTMNAYKAAVEEKYRFFSYGDAMFITYNPQAINERVGE</sequence>
<evidence type="ECO:0000255" key="1">
    <source>
        <dbReference type="HAMAP-Rule" id="MF_00113"/>
    </source>
</evidence>
<protein>
    <recommendedName>
        <fullName evidence="1">S-adenosylmethionine:tRNA ribosyltransferase-isomerase</fullName>
        <ecNumber evidence="1">2.4.99.17</ecNumber>
    </recommendedName>
    <alternativeName>
        <fullName evidence="1">Queuosine biosynthesis protein QueA</fullName>
    </alternativeName>
</protein>